<comment type="function">
    <text evidence="1">Essential for recycling GMP and indirectly, cGMP.</text>
</comment>
<comment type="catalytic activity">
    <reaction evidence="1">
        <text>GMP + ATP = GDP + ADP</text>
        <dbReference type="Rhea" id="RHEA:20780"/>
        <dbReference type="ChEBI" id="CHEBI:30616"/>
        <dbReference type="ChEBI" id="CHEBI:58115"/>
        <dbReference type="ChEBI" id="CHEBI:58189"/>
        <dbReference type="ChEBI" id="CHEBI:456216"/>
        <dbReference type="EC" id="2.7.4.8"/>
    </reaction>
</comment>
<comment type="subcellular location">
    <subcellularLocation>
        <location evidence="1">Cytoplasm</location>
    </subcellularLocation>
</comment>
<comment type="similarity">
    <text evidence="1">Belongs to the guanylate kinase family.</text>
</comment>
<organism>
    <name type="scientific">Streptococcus pyogenes serotype M3 (strain SSI-1)</name>
    <dbReference type="NCBI Taxonomy" id="193567"/>
    <lineage>
        <taxon>Bacteria</taxon>
        <taxon>Bacillati</taxon>
        <taxon>Bacillota</taxon>
        <taxon>Bacilli</taxon>
        <taxon>Lactobacillales</taxon>
        <taxon>Streptococcaceae</taxon>
        <taxon>Streptococcus</taxon>
    </lineage>
</organism>
<feature type="chain" id="PRO_0000411385" description="Guanylate kinase">
    <location>
        <begin position="1"/>
        <end position="211"/>
    </location>
</feature>
<feature type="domain" description="Guanylate kinase-like" evidence="1">
    <location>
        <begin position="5"/>
        <end position="184"/>
    </location>
</feature>
<feature type="binding site" evidence="1">
    <location>
        <begin position="12"/>
        <end position="19"/>
    </location>
    <ligand>
        <name>ATP</name>
        <dbReference type="ChEBI" id="CHEBI:30616"/>
    </ligand>
</feature>
<dbReference type="EC" id="2.7.4.8" evidence="1"/>
<dbReference type="EMBL" id="BA000034">
    <property type="protein sequence ID" value="BAC63582.1"/>
    <property type="molecule type" value="Genomic_DNA"/>
</dbReference>
<dbReference type="RefSeq" id="WP_002983649.1">
    <property type="nucleotide sequence ID" value="NC_004606.1"/>
</dbReference>
<dbReference type="SMR" id="P0DB95"/>
<dbReference type="GeneID" id="69900497"/>
<dbReference type="KEGG" id="sps:SPs0487"/>
<dbReference type="HOGENOM" id="CLU_001715_1_2_9"/>
<dbReference type="GO" id="GO:0005829">
    <property type="term" value="C:cytosol"/>
    <property type="evidence" value="ECO:0007669"/>
    <property type="project" value="TreeGrafter"/>
</dbReference>
<dbReference type="GO" id="GO:0005524">
    <property type="term" value="F:ATP binding"/>
    <property type="evidence" value="ECO:0007669"/>
    <property type="project" value="UniProtKB-UniRule"/>
</dbReference>
<dbReference type="GO" id="GO:0004385">
    <property type="term" value="F:guanylate kinase activity"/>
    <property type="evidence" value="ECO:0007669"/>
    <property type="project" value="UniProtKB-UniRule"/>
</dbReference>
<dbReference type="CDD" id="cd00071">
    <property type="entry name" value="GMPK"/>
    <property type="match status" value="1"/>
</dbReference>
<dbReference type="FunFam" id="3.40.50.300:FF:000855">
    <property type="entry name" value="Guanylate kinase"/>
    <property type="match status" value="1"/>
</dbReference>
<dbReference type="FunFam" id="3.30.63.10:FF:000002">
    <property type="entry name" value="Guanylate kinase 1"/>
    <property type="match status" value="1"/>
</dbReference>
<dbReference type="Gene3D" id="3.30.63.10">
    <property type="entry name" value="Guanylate Kinase phosphate binding domain"/>
    <property type="match status" value="1"/>
</dbReference>
<dbReference type="Gene3D" id="3.40.50.300">
    <property type="entry name" value="P-loop containing nucleotide triphosphate hydrolases"/>
    <property type="match status" value="2"/>
</dbReference>
<dbReference type="HAMAP" id="MF_00328">
    <property type="entry name" value="Guanylate_kinase"/>
    <property type="match status" value="1"/>
</dbReference>
<dbReference type="InterPro" id="IPR008145">
    <property type="entry name" value="GK/Ca_channel_bsu"/>
</dbReference>
<dbReference type="InterPro" id="IPR008144">
    <property type="entry name" value="Guanylate_kin-like_dom"/>
</dbReference>
<dbReference type="InterPro" id="IPR017665">
    <property type="entry name" value="Guanylate_kinase"/>
</dbReference>
<dbReference type="InterPro" id="IPR020590">
    <property type="entry name" value="Guanylate_kinase_CS"/>
</dbReference>
<dbReference type="InterPro" id="IPR027417">
    <property type="entry name" value="P-loop_NTPase"/>
</dbReference>
<dbReference type="NCBIfam" id="TIGR03263">
    <property type="entry name" value="guanyl_kin"/>
    <property type="match status" value="1"/>
</dbReference>
<dbReference type="PANTHER" id="PTHR23117:SF13">
    <property type="entry name" value="GUANYLATE KINASE"/>
    <property type="match status" value="1"/>
</dbReference>
<dbReference type="PANTHER" id="PTHR23117">
    <property type="entry name" value="GUANYLATE KINASE-RELATED"/>
    <property type="match status" value="1"/>
</dbReference>
<dbReference type="Pfam" id="PF00625">
    <property type="entry name" value="Guanylate_kin"/>
    <property type="match status" value="1"/>
</dbReference>
<dbReference type="SMART" id="SM00072">
    <property type="entry name" value="GuKc"/>
    <property type="match status" value="1"/>
</dbReference>
<dbReference type="SUPFAM" id="SSF52540">
    <property type="entry name" value="P-loop containing nucleoside triphosphate hydrolases"/>
    <property type="match status" value="1"/>
</dbReference>
<dbReference type="PROSITE" id="PS00856">
    <property type="entry name" value="GUANYLATE_KINASE_1"/>
    <property type="match status" value="1"/>
</dbReference>
<dbReference type="PROSITE" id="PS50052">
    <property type="entry name" value="GUANYLATE_KINASE_2"/>
    <property type="match status" value="1"/>
</dbReference>
<evidence type="ECO:0000255" key="1">
    <source>
        <dbReference type="HAMAP-Rule" id="MF_00328"/>
    </source>
</evidence>
<proteinExistence type="inferred from homology"/>
<name>KGUA_STRPQ</name>
<sequence>MSERGLLIVFSGPSGVGKGTVRQEIFSTPDHKFEYSVSMTTRPQRPGEVDGVDYFFRTREEFEELIKTGQMLEYAEYVGNYYGTPLTYVNETLDKGIDVFLEIEVQGALQVKSKVPDGVFVFLTPPDLDELEDRLVGRGTDSQEVIAQRIERAKEEIALMREYDYAVVNDEVALAAERVKRIIETEHFRVERVIGRYDKMIKITKNPFKAK</sequence>
<protein>
    <recommendedName>
        <fullName evidence="1">Guanylate kinase</fullName>
        <ecNumber evidence="1">2.7.4.8</ecNumber>
    </recommendedName>
    <alternativeName>
        <fullName evidence="1">GMP kinase</fullName>
    </alternativeName>
</protein>
<keyword id="KW-0067">ATP-binding</keyword>
<keyword id="KW-0963">Cytoplasm</keyword>
<keyword id="KW-0418">Kinase</keyword>
<keyword id="KW-0547">Nucleotide-binding</keyword>
<keyword id="KW-0808">Transferase</keyword>
<gene>
    <name evidence="1" type="primary">gmk</name>
    <name type="ordered locus">SPs0487</name>
</gene>
<accession>P0DB95</accession>
<accession>P65222</accession>
<accession>Q8P001</accession>
<reference key="1">
    <citation type="journal article" date="2003" name="Genome Res.">
        <title>Genome sequence of an M3 strain of Streptococcus pyogenes reveals a large-scale genomic rearrangement in invasive strains and new insights into phage evolution.</title>
        <authorList>
            <person name="Nakagawa I."/>
            <person name="Kurokawa K."/>
            <person name="Yamashita A."/>
            <person name="Nakata M."/>
            <person name="Tomiyasu Y."/>
            <person name="Okahashi N."/>
            <person name="Kawabata S."/>
            <person name="Yamazaki K."/>
            <person name="Shiba T."/>
            <person name="Yasunaga T."/>
            <person name="Hayashi H."/>
            <person name="Hattori M."/>
            <person name="Hamada S."/>
        </authorList>
    </citation>
    <scope>NUCLEOTIDE SEQUENCE [LARGE SCALE GENOMIC DNA]</scope>
    <source>
        <strain>SSI-1</strain>
    </source>
</reference>